<dbReference type="EMBL" id="DS683675">
    <property type="protein sequence ID" value="EEC04278.1"/>
    <property type="molecule type" value="Genomic_DNA"/>
</dbReference>
<dbReference type="RefSeq" id="XP_002409778.1">
    <property type="nucleotide sequence ID" value="XM_002409734.1"/>
</dbReference>
<dbReference type="SMR" id="B7PCF6"/>
<dbReference type="PaxDb" id="6945-B7PCF6"/>
<dbReference type="EnsemblMetazoa" id="ISCW002113-RA">
    <property type="protein sequence ID" value="ISCW002113-PA"/>
    <property type="gene ID" value="ISCW002113"/>
</dbReference>
<dbReference type="VEuPathDB" id="VectorBase:ISCI008209"/>
<dbReference type="VEuPathDB" id="VectorBase:ISCP_032525"/>
<dbReference type="VEuPathDB" id="VectorBase:ISCW002113"/>
<dbReference type="HOGENOM" id="CLU_170585_0_0_1"/>
<dbReference type="InParanoid" id="B7PCF6"/>
<dbReference type="OrthoDB" id="6478836at2759"/>
<dbReference type="PhylomeDB" id="B7PCF6"/>
<dbReference type="Proteomes" id="UP000001555">
    <property type="component" value="Unassembled WGS sequence"/>
</dbReference>
<dbReference type="GO" id="GO:0005576">
    <property type="term" value="C:extracellular region"/>
    <property type="evidence" value="ECO:0000250"/>
    <property type="project" value="UniProtKB"/>
</dbReference>
<dbReference type="GO" id="GO:0016531">
    <property type="term" value="F:copper chaperone activity"/>
    <property type="evidence" value="ECO:0000250"/>
    <property type="project" value="UniProtKB"/>
</dbReference>
<dbReference type="GO" id="GO:0005506">
    <property type="term" value="F:iron ion binding"/>
    <property type="evidence" value="ECO:0000250"/>
    <property type="project" value="UniProtKB"/>
</dbReference>
<dbReference type="GO" id="GO:0046911">
    <property type="term" value="F:metal chelating activity"/>
    <property type="evidence" value="ECO:0000250"/>
    <property type="project" value="UniProtKB"/>
</dbReference>
<dbReference type="GO" id="GO:0050832">
    <property type="term" value="P:defense response to fungus"/>
    <property type="evidence" value="ECO:0000250"/>
    <property type="project" value="UniProtKB"/>
</dbReference>
<dbReference type="GO" id="GO:0050830">
    <property type="term" value="P:defense response to Gram-positive bacterium"/>
    <property type="evidence" value="ECO:0000250"/>
    <property type="project" value="UniProtKB"/>
</dbReference>
<dbReference type="GO" id="GO:0045087">
    <property type="term" value="P:innate immune response"/>
    <property type="evidence" value="ECO:0007669"/>
    <property type="project" value="UniProtKB-KW"/>
</dbReference>
<dbReference type="GO" id="GO:0031640">
    <property type="term" value="P:killing of cells of another organism"/>
    <property type="evidence" value="ECO:0007669"/>
    <property type="project" value="UniProtKB-KW"/>
</dbReference>
<dbReference type="Gene3D" id="1.10.150.440">
    <property type="match status" value="1"/>
</dbReference>
<feature type="signal peptide" evidence="2">
    <location>
        <begin position="1"/>
        <end position="19"/>
    </location>
</feature>
<feature type="chain" id="PRO_0000392950" description="Antimicrobial peptide microplusin" evidence="2">
    <location>
        <begin position="20"/>
        <end position="107"/>
    </location>
</feature>
<feature type="region of interest" description="Disordered" evidence="3">
    <location>
        <begin position="86"/>
        <end position="107"/>
    </location>
</feature>
<feature type="compositionally biased region" description="Basic and acidic residues" evidence="3">
    <location>
        <begin position="87"/>
        <end position="107"/>
    </location>
</feature>
<feature type="disulfide bond" evidence="2">
    <location>
        <begin position="25"/>
        <end position="60"/>
    </location>
</feature>
<feature type="disulfide bond" evidence="2">
    <location>
        <begin position="38"/>
        <end position="88"/>
    </location>
</feature>
<feature type="disulfide bond" evidence="2">
    <location>
        <begin position="49"/>
        <end position="54"/>
    </location>
</feature>
<organism>
    <name type="scientific">Ixodes scapularis</name>
    <name type="common">Black-legged tick</name>
    <name type="synonym">Deer tick</name>
    <dbReference type="NCBI Taxonomy" id="6945"/>
    <lineage>
        <taxon>Eukaryota</taxon>
        <taxon>Metazoa</taxon>
        <taxon>Ecdysozoa</taxon>
        <taxon>Arthropoda</taxon>
        <taxon>Chelicerata</taxon>
        <taxon>Arachnida</taxon>
        <taxon>Acari</taxon>
        <taxon>Parasitiformes</taxon>
        <taxon>Ixodida</taxon>
        <taxon>Ixodoidea</taxon>
        <taxon>Ixodidae</taxon>
        <taxon>Ixodinae</taxon>
        <taxon>Ixodes</taxon>
    </lineage>
</organism>
<protein>
    <recommendedName>
        <fullName evidence="2">Antimicrobial peptide microplusin</fullName>
    </recommendedName>
</protein>
<keyword id="KW-0044">Antibiotic</keyword>
<keyword id="KW-0929">Antimicrobial</keyword>
<keyword id="KW-0186">Copper</keyword>
<keyword id="KW-1015">Disulfide bond</keyword>
<keyword id="KW-0295">Fungicide</keyword>
<keyword id="KW-0391">Immunity</keyword>
<keyword id="KW-0399">Innate immunity</keyword>
<keyword id="KW-0479">Metal-binding</keyword>
<keyword id="KW-1185">Reference proteome</keyword>
<keyword id="KW-0964">Secreted</keyword>
<keyword id="KW-0732">Signal</keyword>
<name>MPSIN_IXOSC</name>
<reference evidence="5" key="1">
    <citation type="submission" date="2008-03" db="EMBL/GenBank/DDBJ databases">
        <title>Annotation of Ixodes scapularis.</title>
        <authorList>
            <consortium name="Ixodes scapularis Genome Project Consortium"/>
            <person name="Caler E."/>
            <person name="Hannick L.I."/>
            <person name="Bidwell S."/>
            <person name="Joardar V."/>
            <person name="Thiagarajan M."/>
            <person name="Amedeo P."/>
            <person name="Galinsky K.J."/>
            <person name="Schobel S."/>
            <person name="Inman J."/>
            <person name="Hostetler J."/>
            <person name="Miller J."/>
            <person name="Hammond M."/>
            <person name="Megy K."/>
            <person name="Lawson D."/>
            <person name="Kodira C."/>
            <person name="Sutton G."/>
            <person name="Meyer J."/>
            <person name="Hill C.A."/>
            <person name="Birren B."/>
            <person name="Nene V."/>
            <person name="Collins F."/>
            <person name="Alarcon-Chaidez F."/>
            <person name="Wikel S."/>
            <person name="Strausberg R."/>
        </authorList>
    </citation>
    <scope>NUCLEOTIDE SEQUENCE [LARGE SCALE GENOMIC DNA]</scope>
    <source>
        <strain evidence="5">Wikel</strain>
        <tissue evidence="4">Embryo</tissue>
    </source>
</reference>
<gene>
    <name type="ORF">ISCW002113</name>
</gene>
<proteinExistence type="inferred from homology"/>
<evidence type="ECO:0000250" key="1"/>
<evidence type="ECO:0000250" key="2">
    <source>
        <dbReference type="UniProtKB" id="Q86LE5"/>
    </source>
</evidence>
<evidence type="ECO:0000256" key="3">
    <source>
        <dbReference type="SAM" id="MobiDB-lite"/>
    </source>
</evidence>
<evidence type="ECO:0000269" key="4">
    <source ref="1"/>
</evidence>
<evidence type="ECO:0000312" key="5">
    <source>
        <dbReference type="EMBL" id="EEC04278.1"/>
    </source>
</evidence>
<sequence length="107" mass="11661">MKSLLVCLVLAVVVLVASGHHVELCKKNDAELKEALTCITSKLPAALGCNDKSCVFEKLCKEGDLDEALKKHFTEAEVQTLHTTATDCDHSHGHEHSHGHEHGHGHH</sequence>
<comment type="function">
    <text evidence="1">Has bacteriostatic activity against Gram-positive bacteria, but not against Gram-negative bacteria. Has fungistatic activity against some but not all fungi. Binds and sequesters copper and iron ions. Copper-chelating is crucial for antimicrobial activity against M.luteus (By similarity).</text>
</comment>
<comment type="subcellular location">
    <subcellularLocation>
        <location evidence="2">Secreted</location>
    </subcellularLocation>
</comment>
<accession>B7PCF6</accession>